<name>UREF_CERS5</name>
<accession>A4WR78</accession>
<proteinExistence type="inferred from homology"/>
<feature type="chain" id="PRO_5000238695" description="Urease accessory protein UreF">
    <location>
        <begin position="1"/>
        <end position="210"/>
    </location>
</feature>
<protein>
    <recommendedName>
        <fullName evidence="1">Urease accessory protein UreF</fullName>
    </recommendedName>
</protein>
<comment type="function">
    <text evidence="1">Required for maturation of urease via the functional incorporation of the urease nickel metallocenter.</text>
</comment>
<comment type="subunit">
    <text evidence="1">UreD, UreF and UreG form a complex that acts as a GTP-hydrolysis-dependent molecular chaperone, activating the urease apoprotein by helping to assemble the nickel containing metallocenter of UreC. The UreE protein probably delivers the nickel.</text>
</comment>
<comment type="subcellular location">
    <subcellularLocation>
        <location evidence="1">Cytoplasm</location>
    </subcellularLocation>
</comment>
<comment type="similarity">
    <text evidence="1">Belongs to the UreF family.</text>
</comment>
<reference key="1">
    <citation type="submission" date="2007-04" db="EMBL/GenBank/DDBJ databases">
        <title>Complete sequence of chromosome of Rhodobacter sphaeroides ATCC 17025.</title>
        <authorList>
            <consortium name="US DOE Joint Genome Institute"/>
            <person name="Copeland A."/>
            <person name="Lucas S."/>
            <person name="Lapidus A."/>
            <person name="Barry K."/>
            <person name="Detter J.C."/>
            <person name="Glavina del Rio T."/>
            <person name="Hammon N."/>
            <person name="Israni S."/>
            <person name="Dalin E."/>
            <person name="Tice H."/>
            <person name="Pitluck S."/>
            <person name="Chertkov O."/>
            <person name="Brettin T."/>
            <person name="Bruce D."/>
            <person name="Han C."/>
            <person name="Schmutz J."/>
            <person name="Larimer F."/>
            <person name="Land M."/>
            <person name="Hauser L."/>
            <person name="Kyrpides N."/>
            <person name="Kim E."/>
            <person name="Richardson P."/>
            <person name="Mackenzie C."/>
            <person name="Choudhary M."/>
            <person name="Donohue T.J."/>
            <person name="Kaplan S."/>
        </authorList>
    </citation>
    <scope>NUCLEOTIDE SEQUENCE [LARGE SCALE GENOMIC DNA]</scope>
    <source>
        <strain>ATCC 17025 / ATH 2.4.3</strain>
    </source>
</reference>
<keyword id="KW-0143">Chaperone</keyword>
<keyword id="KW-0963">Cytoplasm</keyword>
<keyword id="KW-0996">Nickel insertion</keyword>
<organism>
    <name type="scientific">Cereibacter sphaeroides (strain ATCC 17025 / ATH 2.4.3)</name>
    <name type="common">Rhodobacter sphaeroides</name>
    <dbReference type="NCBI Taxonomy" id="349102"/>
    <lineage>
        <taxon>Bacteria</taxon>
        <taxon>Pseudomonadati</taxon>
        <taxon>Pseudomonadota</taxon>
        <taxon>Alphaproteobacteria</taxon>
        <taxon>Rhodobacterales</taxon>
        <taxon>Paracoccaceae</taxon>
        <taxon>Cereibacter</taxon>
    </lineage>
</organism>
<gene>
    <name evidence="1" type="primary">ureF</name>
    <name type="ordered locus">Rsph17025_0991</name>
</gene>
<evidence type="ECO:0000255" key="1">
    <source>
        <dbReference type="HAMAP-Rule" id="MF_01385"/>
    </source>
</evidence>
<dbReference type="EMBL" id="CP000661">
    <property type="protein sequence ID" value="ABP69892.1"/>
    <property type="molecule type" value="Genomic_DNA"/>
</dbReference>
<dbReference type="SMR" id="A4WR78"/>
<dbReference type="STRING" id="349102.Rsph17025_0991"/>
<dbReference type="KEGG" id="rsq:Rsph17025_0991"/>
<dbReference type="eggNOG" id="COG0830">
    <property type="taxonomic scope" value="Bacteria"/>
</dbReference>
<dbReference type="HOGENOM" id="CLU_049215_2_0_5"/>
<dbReference type="BioCyc" id="RSPH349102:G1G8M-1017-MONOMER"/>
<dbReference type="GO" id="GO:0005737">
    <property type="term" value="C:cytoplasm"/>
    <property type="evidence" value="ECO:0007669"/>
    <property type="project" value="UniProtKB-SubCell"/>
</dbReference>
<dbReference type="GO" id="GO:0016151">
    <property type="term" value="F:nickel cation binding"/>
    <property type="evidence" value="ECO:0007669"/>
    <property type="project" value="UniProtKB-UniRule"/>
</dbReference>
<dbReference type="Gene3D" id="1.10.4190.10">
    <property type="entry name" value="Urease accessory protein UreF"/>
    <property type="match status" value="1"/>
</dbReference>
<dbReference type="HAMAP" id="MF_01385">
    <property type="entry name" value="UreF"/>
    <property type="match status" value="1"/>
</dbReference>
<dbReference type="InterPro" id="IPR002639">
    <property type="entry name" value="UreF"/>
</dbReference>
<dbReference type="InterPro" id="IPR038277">
    <property type="entry name" value="UreF_sf"/>
</dbReference>
<dbReference type="PANTHER" id="PTHR33620">
    <property type="entry name" value="UREASE ACCESSORY PROTEIN F"/>
    <property type="match status" value="1"/>
</dbReference>
<dbReference type="PANTHER" id="PTHR33620:SF1">
    <property type="entry name" value="UREASE ACCESSORY PROTEIN F"/>
    <property type="match status" value="1"/>
</dbReference>
<dbReference type="Pfam" id="PF01730">
    <property type="entry name" value="UreF"/>
    <property type="match status" value="1"/>
</dbReference>
<dbReference type="PIRSF" id="PIRSF009467">
    <property type="entry name" value="Ureas_acces_UreF"/>
    <property type="match status" value="1"/>
</dbReference>
<sequence length="210" mass="22108">MSRALLTLVQWLSPAFPTGAFAYSHGLEWAIAEGEVQDAAGVEQWVADILRFGSGRTDAILLAHALKGHDLEALSDLARALAPSAERLRETEEQGAAFAATTAALTGRALPPRPLPVAIGQAAAALGRPVTEVLELTLHAFAANLVSAAVRFVPLGQTEGQAILSSLHPLIEEIARESAEAPIEAIGSAAVRGDLAAMRHETQQVRIFKT</sequence>